<feature type="chain" id="PRO_0000219311" description="Cyclic nucleotide-gated channel alpha-2">
    <location>
        <begin position="1"/>
        <end position="663"/>
    </location>
</feature>
<feature type="topological domain" description="Cytoplasmic" evidence="10">
    <location>
        <begin position="1"/>
        <end position="144"/>
    </location>
</feature>
<feature type="transmembrane region" description="Helical; Name=S1" evidence="2">
    <location>
        <begin position="145"/>
        <end position="166"/>
    </location>
</feature>
<feature type="topological domain" description="Extracellular" evidence="10">
    <location>
        <begin position="167"/>
        <end position="176"/>
    </location>
</feature>
<feature type="transmembrane region" description="Helical; Name=S2" evidence="2">
    <location>
        <begin position="177"/>
        <end position="197"/>
    </location>
</feature>
<feature type="topological domain" description="Cytoplasmic" evidence="10">
    <location>
        <begin position="198"/>
        <end position="222"/>
    </location>
</feature>
<feature type="transmembrane region" description="Helical; Name=S3" evidence="2">
    <location>
        <begin position="223"/>
        <end position="241"/>
    </location>
</feature>
<feature type="topological domain" description="Extracellular" evidence="10">
    <location>
        <begin position="242"/>
        <end position="246"/>
    </location>
</feature>
<feature type="transmembrane region" description="Helical; Name=S4" evidence="2">
    <location>
        <begin position="247"/>
        <end position="265"/>
    </location>
</feature>
<feature type="topological domain" description="Cytoplasmic" evidence="10">
    <location>
        <begin position="266"/>
        <end position="272"/>
    </location>
</feature>
<feature type="transmembrane region" description="Helical; Name=S5" evidence="2">
    <location>
        <begin position="273"/>
        <end position="296"/>
    </location>
</feature>
<feature type="topological domain" description="Extracellular" evidence="10">
    <location>
        <begin position="297"/>
        <end position="319"/>
    </location>
</feature>
<feature type="transmembrane region" description="Helical; Name=P-helix" evidence="2">
    <location>
        <begin position="320"/>
        <end position="354"/>
    </location>
</feature>
<feature type="transmembrane region" description="Helical; Name=S6" evidence="2">
    <location>
        <begin position="355"/>
        <end position="379"/>
    </location>
</feature>
<feature type="topological domain" description="Cytoplasmic" evidence="10">
    <location>
        <begin position="380"/>
        <end position="663"/>
    </location>
</feature>
<feature type="region of interest" description="Disordered" evidence="6">
    <location>
        <begin position="1"/>
        <end position="61"/>
    </location>
</feature>
<feature type="region of interest" description="Ion conduction pathway" evidence="2">
    <location>
        <begin position="270"/>
        <end position="378"/>
    </location>
</feature>
<feature type="region of interest" description="Selectivity filter" evidence="2">
    <location>
        <begin position="337"/>
        <end position="340"/>
    </location>
</feature>
<feature type="region of interest" description="C-linker" evidence="2">
    <location>
        <begin position="380"/>
        <end position="456"/>
    </location>
</feature>
<feature type="region of interest" description="Cyclic nucleotide-binding domain" evidence="2">
    <location>
        <begin position="460"/>
        <end position="580"/>
    </location>
</feature>
<feature type="region of interest" description="Disordered" evidence="6">
    <location>
        <begin position="640"/>
        <end position="663"/>
    </location>
</feature>
<feature type="coiled-coil region" evidence="2">
    <location>
        <begin position="597"/>
        <end position="651"/>
    </location>
</feature>
<feature type="compositionally biased region" description="Low complexity" evidence="6">
    <location>
        <begin position="12"/>
        <end position="23"/>
    </location>
</feature>
<feature type="binding site" evidence="2">
    <location>
        <position position="520"/>
    </location>
    <ligand>
        <name>3',5'-cyclic GMP</name>
        <dbReference type="ChEBI" id="CHEBI:57746"/>
    </ligand>
</feature>
<feature type="binding site" evidence="2">
    <location>
        <position position="523"/>
    </location>
    <ligand>
        <name>3',5'-cyclic GMP</name>
        <dbReference type="ChEBI" id="CHEBI:57746"/>
    </ligand>
</feature>
<feature type="binding site" evidence="2">
    <location>
        <position position="536"/>
    </location>
    <ligand>
        <name>3',5'-cyclic AMP</name>
        <dbReference type="ChEBI" id="CHEBI:58165"/>
    </ligand>
</feature>
<feature type="binding site" evidence="2">
    <location>
        <position position="536"/>
    </location>
    <ligand>
        <name>3',5'-cyclic GMP</name>
        <dbReference type="ChEBI" id="CHEBI:57746"/>
    </ligand>
</feature>
<feature type="binding site" evidence="2">
    <location>
        <position position="537"/>
    </location>
    <ligand>
        <name>3',5'-cyclic AMP</name>
        <dbReference type="ChEBI" id="CHEBI:58165"/>
    </ligand>
</feature>
<feature type="binding site" evidence="2">
    <location>
        <position position="537"/>
    </location>
    <ligand>
        <name>3',5'-cyclic GMP</name>
        <dbReference type="ChEBI" id="CHEBI:57746"/>
    </ligand>
</feature>
<feature type="site" description="Central gate" evidence="2">
    <location>
        <position position="364"/>
    </location>
</feature>
<feature type="site" description="Central gate" evidence="2">
    <location>
        <position position="368"/>
    </location>
</feature>
<feature type="helix" evidence="11">
    <location>
        <begin position="66"/>
        <end position="81"/>
    </location>
</feature>
<gene>
    <name evidence="8" type="primary">CNGA2</name>
    <name type="synonym">CNCG2</name>
</gene>
<reference key="1">
    <citation type="journal article" date="1990" name="FEBS Lett.">
        <title>Primary structure of cAMP-gated channel from bovine olfactory epithelium.</title>
        <authorList>
            <person name="Ludwig J."/>
            <person name="Margalit T."/>
            <person name="Eismann E."/>
            <person name="Lancet D."/>
            <person name="Kaupp U.B."/>
        </authorList>
    </citation>
    <scope>NUCLEOTIDE SEQUENCE [MRNA]</scope>
    <source>
        <tissue>Olfactory epithelium</tissue>
    </source>
</reference>
<reference key="2">
    <citation type="journal article" date="1999" name="EMBO J.">
        <title>Ca2+ permeation in cyclic nucleotide-gated channels.</title>
        <authorList>
            <person name="Dzeja C."/>
            <person name="Hagen V."/>
            <person name="Kaupp U.B."/>
            <person name="Frings S."/>
        </authorList>
    </citation>
    <scope>FUNCTION</scope>
    <scope>TRANSPORTER ACTIVITY</scope>
</reference>
<reference key="3">
    <citation type="journal article" date="2001" name="Science">
        <title>Nomenclature for ion channel subunits.</title>
        <authorList>
            <person name="Bradley J."/>
            <person name="Frings S."/>
            <person name="Yau K.W."/>
            <person name="Reed R."/>
        </authorList>
    </citation>
    <scope>NOMENCLATURE</scope>
</reference>
<reference key="4">
    <citation type="journal article" date="2005" name="J. Biomol. NMR">
        <title>Structure of calmodulin complexed with an olfactory CNG channel fragment and role of the central linker: residual dipolar couplings to evaluate calmodulin binding modes outside the kinase family.</title>
        <authorList>
            <person name="Contessa G.M."/>
            <person name="Orsale M."/>
            <person name="Melino S."/>
            <person name="Torre V."/>
            <person name="Paci M."/>
            <person name="Desideri A."/>
            <person name="Cicero D.O."/>
        </authorList>
    </citation>
    <scope>STRUCTURE BY NMR OF 60-85 IN COMPLEX WITH CALMODULIN</scope>
</reference>
<evidence type="ECO:0000250" key="1"/>
<evidence type="ECO:0000250" key="2">
    <source>
        <dbReference type="UniProtKB" id="P29973"/>
    </source>
</evidence>
<evidence type="ECO:0000250" key="3">
    <source>
        <dbReference type="UniProtKB" id="Q00194"/>
    </source>
</evidence>
<evidence type="ECO:0000250" key="4">
    <source>
        <dbReference type="UniProtKB" id="Q00195"/>
    </source>
</evidence>
<evidence type="ECO:0000255" key="5"/>
<evidence type="ECO:0000256" key="6">
    <source>
        <dbReference type="SAM" id="MobiDB-lite"/>
    </source>
</evidence>
<evidence type="ECO:0000269" key="7">
    <source>
    </source>
</evidence>
<evidence type="ECO:0000303" key="8">
    <source>
    </source>
</evidence>
<evidence type="ECO:0000303" key="9">
    <source>
    </source>
</evidence>
<evidence type="ECO:0000305" key="10"/>
<evidence type="ECO:0007829" key="11">
    <source>
        <dbReference type="PDB" id="1SY9"/>
    </source>
</evidence>
<protein>
    <recommendedName>
        <fullName>Cyclic nucleotide-gated channel alpha-2</fullName>
        <shortName>CNG channel alpha-2</shortName>
        <shortName>CNG-2</shortName>
        <shortName evidence="8">CNG2</shortName>
    </recommendedName>
    <alternativeName>
        <fullName>Cyclic nucleotide-gated channel alpha 3</fullName>
        <shortName evidence="9">CNCalpha3</shortName>
        <shortName evidence="8">CNGa3</shortName>
    </alternativeName>
    <alternativeName>
        <fullName>Olfactory cyclic nucleotide-gated channel subunit 1</fullName>
        <shortName evidence="8">OCNC1</shortName>
    </alternativeName>
</protein>
<name>CNGA2_BOVIN</name>
<sequence length="663" mass="76014">MTEKANGVKSSPANNHNHHAPPAIKASGKDDHRASSRPQSAAADDTSSELQQLAEMDAPQQRRGGFRRIARLVGVLREWAYRNFREEEPRPDSFLERFRGPELHTVTTQQGDGKGDKDGEGKGTKKKFELFVLDPAGDWYYRWLFLIALPVLYNWCLLVARACFSDLQKGYYIVWLVLDYVSDVVYIADLFIRLRTGFLEQGLLVKDTKKLRDNYIHTMQFKLDVASIIPTDLIYFAVGIHNPEVRFNRLLHFARMFEFFDRTETRTSYPNIFRISNLILYILIIIHWNACIYYAISKSIGFGVDTWVYPNITDPEYGYLSREYIYCLYWSTLTLTTIGETPPPVKDEEYLFVIFDFLIGVLIFATIVGNVGSMISNMNATRAEFQAKIDAVKHYMQFRKVSKEMEAKVIRWFDYLWTNKKSVDEREVLKNLPAKLRAEIAINVHLSTLKKVRIFQDCEAGLLVELVLKLRPQVFSPGDYICRKGDIGKEMYIIKEGKLAVVADDGVTQYALLSAGSCFGEISILNIKGSKMGNRRTANIRSLGYSDLFCLSKDDLMEAVTEYPDAKRVLEERGREILMKEGLLDENEVAASMEVDVQEKLEQLETNMDTLYTRFARLLAEYTGAQQKLKQRITVLETKMKQNNEDDSLSDGMNSPEPPAEKP</sequence>
<accession>Q03041</accession>
<dbReference type="EMBL" id="X55010">
    <property type="protein sequence ID" value="CAA38754.1"/>
    <property type="molecule type" value="mRNA"/>
</dbReference>
<dbReference type="PIR" id="S11521">
    <property type="entry name" value="S11521"/>
</dbReference>
<dbReference type="RefSeq" id="NP_001001139.1">
    <property type="nucleotide sequence ID" value="NM_001001139.2"/>
</dbReference>
<dbReference type="PDB" id="1SY9">
    <property type="method" value="NMR"/>
    <property type="chains" value="B=60-85"/>
</dbReference>
<dbReference type="PDBsum" id="1SY9"/>
<dbReference type="BMRB" id="Q03041"/>
<dbReference type="SMR" id="Q03041"/>
<dbReference type="FunCoup" id="Q03041">
    <property type="interactions" value="9"/>
</dbReference>
<dbReference type="IntAct" id="Q03041">
    <property type="interactions" value="1"/>
</dbReference>
<dbReference type="MINT" id="Q03041"/>
<dbReference type="STRING" id="9913.ENSBTAP00000027618"/>
<dbReference type="GlyCosmos" id="Q03041">
    <property type="glycosylation" value="1 site, No reported glycans"/>
</dbReference>
<dbReference type="PaxDb" id="9913-ENSBTAP00000027618"/>
<dbReference type="GeneID" id="407172"/>
<dbReference type="KEGG" id="bta:407172"/>
<dbReference type="CTD" id="1260"/>
<dbReference type="eggNOG" id="KOG0500">
    <property type="taxonomic scope" value="Eukaryota"/>
</dbReference>
<dbReference type="InParanoid" id="Q03041"/>
<dbReference type="OrthoDB" id="421226at2759"/>
<dbReference type="Proteomes" id="UP000009136">
    <property type="component" value="Unplaced"/>
</dbReference>
<dbReference type="GO" id="GO:0017071">
    <property type="term" value="C:intracellular cyclic nucleotide activated cation channel complex"/>
    <property type="evidence" value="ECO:0000318"/>
    <property type="project" value="GO_Central"/>
</dbReference>
<dbReference type="GO" id="GO:0098804">
    <property type="term" value="C:non-motile cilium membrane"/>
    <property type="evidence" value="ECO:0000250"/>
    <property type="project" value="UniProtKB"/>
</dbReference>
<dbReference type="GO" id="GO:0005886">
    <property type="term" value="C:plasma membrane"/>
    <property type="evidence" value="ECO:0000318"/>
    <property type="project" value="GO_Central"/>
</dbReference>
<dbReference type="GO" id="GO:0005262">
    <property type="term" value="F:calcium channel activity"/>
    <property type="evidence" value="ECO:0007669"/>
    <property type="project" value="UniProtKB-KW"/>
</dbReference>
<dbReference type="GO" id="GO:0005516">
    <property type="term" value="F:calmodulin binding"/>
    <property type="evidence" value="ECO:0007669"/>
    <property type="project" value="UniProtKB-KW"/>
</dbReference>
<dbReference type="GO" id="GO:0030552">
    <property type="term" value="F:cAMP binding"/>
    <property type="evidence" value="ECO:0007669"/>
    <property type="project" value="UniProtKB-KW"/>
</dbReference>
<dbReference type="GO" id="GO:0030553">
    <property type="term" value="F:cGMP binding"/>
    <property type="evidence" value="ECO:0000318"/>
    <property type="project" value="GO_Central"/>
</dbReference>
<dbReference type="GO" id="GO:0005222">
    <property type="term" value="F:intracellularly cAMP-activated cation channel activity"/>
    <property type="evidence" value="ECO:0000318"/>
    <property type="project" value="GO_Central"/>
</dbReference>
<dbReference type="GO" id="GO:0005223">
    <property type="term" value="F:intracellularly cGMP-activated cation channel activity"/>
    <property type="evidence" value="ECO:0000314"/>
    <property type="project" value="UniProtKB"/>
</dbReference>
<dbReference type="GO" id="GO:0005216">
    <property type="term" value="F:monoatomic ion channel activity"/>
    <property type="evidence" value="ECO:0000250"/>
    <property type="project" value="AgBase"/>
</dbReference>
<dbReference type="GO" id="GO:0044877">
    <property type="term" value="F:protein-containing complex binding"/>
    <property type="evidence" value="ECO:0000318"/>
    <property type="project" value="GO_Central"/>
</dbReference>
<dbReference type="GO" id="GO:0006816">
    <property type="term" value="P:calcium ion transport"/>
    <property type="evidence" value="ECO:0000314"/>
    <property type="project" value="UniProtKB"/>
</dbReference>
<dbReference type="GO" id="GO:0098655">
    <property type="term" value="P:monoatomic cation transmembrane transport"/>
    <property type="evidence" value="ECO:0000318"/>
    <property type="project" value="GO_Central"/>
</dbReference>
<dbReference type="GO" id="GO:0006813">
    <property type="term" value="P:potassium ion transport"/>
    <property type="evidence" value="ECO:0000250"/>
    <property type="project" value="UniProtKB"/>
</dbReference>
<dbReference type="GO" id="GO:0007608">
    <property type="term" value="P:sensory perception of smell"/>
    <property type="evidence" value="ECO:0000250"/>
    <property type="project" value="AgBase"/>
</dbReference>
<dbReference type="GO" id="GO:0006814">
    <property type="term" value="P:sodium ion transport"/>
    <property type="evidence" value="ECO:0000250"/>
    <property type="project" value="UniProtKB"/>
</dbReference>
<dbReference type="CDD" id="cd00038">
    <property type="entry name" value="CAP_ED"/>
    <property type="match status" value="1"/>
</dbReference>
<dbReference type="FunFam" id="2.60.120.10:FF:000002">
    <property type="entry name" value="Cyclic nucleotide gated channel alpha 1a"/>
    <property type="match status" value="1"/>
</dbReference>
<dbReference type="FunFam" id="1.10.287.630:FF:000001">
    <property type="entry name" value="Cyclic nucleotide-gated channel alpha 3"/>
    <property type="match status" value="1"/>
</dbReference>
<dbReference type="FunFam" id="1.10.287.70:FF:000030">
    <property type="entry name" value="Cyclic nucleotide-gated channel alpha 3"/>
    <property type="match status" value="1"/>
</dbReference>
<dbReference type="FunFam" id="1.20.5.300:FF:000002">
    <property type="entry name" value="Cyclic nucleotide-gated channel alpha 3"/>
    <property type="match status" value="1"/>
</dbReference>
<dbReference type="Gene3D" id="1.10.287.70">
    <property type="match status" value="1"/>
</dbReference>
<dbReference type="Gene3D" id="1.20.5.300">
    <property type="match status" value="1"/>
</dbReference>
<dbReference type="Gene3D" id="1.10.287.630">
    <property type="entry name" value="Helix hairpin bin"/>
    <property type="match status" value="1"/>
</dbReference>
<dbReference type="Gene3D" id="2.60.120.10">
    <property type="entry name" value="Jelly Rolls"/>
    <property type="match status" value="1"/>
</dbReference>
<dbReference type="IDEAL" id="IID50188"/>
<dbReference type="InterPro" id="IPR032406">
    <property type="entry name" value="CLZ_dom"/>
</dbReference>
<dbReference type="InterPro" id="IPR050866">
    <property type="entry name" value="CNG_cation_channel"/>
</dbReference>
<dbReference type="InterPro" id="IPR018488">
    <property type="entry name" value="cNMP-bd_CS"/>
</dbReference>
<dbReference type="InterPro" id="IPR000595">
    <property type="entry name" value="cNMP-bd_dom"/>
</dbReference>
<dbReference type="InterPro" id="IPR018490">
    <property type="entry name" value="cNMP-bd_dom_sf"/>
</dbReference>
<dbReference type="InterPro" id="IPR005821">
    <property type="entry name" value="Ion_trans_dom"/>
</dbReference>
<dbReference type="InterPro" id="IPR014710">
    <property type="entry name" value="RmlC-like_jellyroll"/>
</dbReference>
<dbReference type="PANTHER" id="PTHR45638">
    <property type="entry name" value="CYCLIC NUCLEOTIDE-GATED CATION CHANNEL SUBUNIT A"/>
    <property type="match status" value="1"/>
</dbReference>
<dbReference type="PANTHER" id="PTHR45638:SF3">
    <property type="entry name" value="CYCLIC NUCLEOTIDE-GATED OLFACTORY CHANNEL"/>
    <property type="match status" value="1"/>
</dbReference>
<dbReference type="Pfam" id="PF16526">
    <property type="entry name" value="CLZ"/>
    <property type="match status" value="1"/>
</dbReference>
<dbReference type="Pfam" id="PF00027">
    <property type="entry name" value="cNMP_binding"/>
    <property type="match status" value="1"/>
</dbReference>
<dbReference type="Pfam" id="PF00520">
    <property type="entry name" value="Ion_trans"/>
    <property type="match status" value="1"/>
</dbReference>
<dbReference type="SMART" id="SM00100">
    <property type="entry name" value="cNMP"/>
    <property type="match status" value="1"/>
</dbReference>
<dbReference type="SUPFAM" id="SSF51206">
    <property type="entry name" value="cAMP-binding domain-like"/>
    <property type="match status" value="1"/>
</dbReference>
<dbReference type="SUPFAM" id="SSF81324">
    <property type="entry name" value="Voltage-gated potassium channels"/>
    <property type="match status" value="1"/>
</dbReference>
<dbReference type="PROSITE" id="PS00888">
    <property type="entry name" value="CNMP_BINDING_1"/>
    <property type="match status" value="1"/>
</dbReference>
<dbReference type="PROSITE" id="PS00889">
    <property type="entry name" value="CNMP_BINDING_2"/>
    <property type="match status" value="1"/>
</dbReference>
<dbReference type="PROSITE" id="PS50042">
    <property type="entry name" value="CNMP_BINDING_3"/>
    <property type="match status" value="1"/>
</dbReference>
<proteinExistence type="evidence at protein level"/>
<comment type="function">
    <text evidence="4 7">Pore-forming subunit of the olfactory cyclic nucleotide-gated channel. Operates in the cilia of olfactory sensory neurons where chemical stimulation of the odorant is converted to an electrical signal. Mediates odorant-induced cAMP-dependent Ca(2+) influx triggering neuron depolarization. The rise of intracellular Ca(2+) levels potentiates the olfactory response by activating Ca(2+)-dependent Cl(-) channels, but it also serves as a negative feedback signal to desensitize the channel for rapid adaptation to odorants. Conducts cAMP- and cGMP-gated ion currents, with permeability for monovalent and divalent cations.</text>
</comment>
<comment type="catalytic activity">
    <reaction evidence="7">
        <text>Ca(2+)(in) = Ca(2+)(out)</text>
        <dbReference type="Rhea" id="RHEA:29671"/>
        <dbReference type="ChEBI" id="CHEBI:29108"/>
    </reaction>
</comment>
<comment type="catalytic activity">
    <reaction evidence="7">
        <text>Na(+)(in) = Na(+)(out)</text>
        <dbReference type="Rhea" id="RHEA:34963"/>
        <dbReference type="ChEBI" id="CHEBI:29101"/>
    </reaction>
</comment>
<comment type="catalytic activity">
    <reaction evidence="4">
        <text>K(+)(in) = K(+)(out)</text>
        <dbReference type="Rhea" id="RHEA:29463"/>
        <dbReference type="ChEBI" id="CHEBI:29103"/>
    </reaction>
</comment>
<comment type="catalytic activity">
    <reaction evidence="3">
        <text>NH4(+)(in) = NH4(+)(out)</text>
        <dbReference type="Rhea" id="RHEA:28747"/>
        <dbReference type="ChEBI" id="CHEBI:28938"/>
    </reaction>
</comment>
<comment type="catalytic activity">
    <reaction evidence="3">
        <text>Rb(+)(in) = Rb(+)(out)</text>
        <dbReference type="Rhea" id="RHEA:78547"/>
        <dbReference type="ChEBI" id="CHEBI:49847"/>
    </reaction>
</comment>
<comment type="catalytic activity">
    <reaction evidence="3">
        <text>Li(+)(in) = Li(+)(out)</text>
        <dbReference type="Rhea" id="RHEA:78551"/>
        <dbReference type="ChEBI" id="CHEBI:49713"/>
    </reaction>
</comment>
<comment type="catalytic activity">
    <reaction evidence="3">
        <text>Cs(+)(in) = Cs(+)(out)</text>
        <dbReference type="Rhea" id="RHEA:78555"/>
        <dbReference type="ChEBI" id="CHEBI:49547"/>
    </reaction>
</comment>
<comment type="subunit">
    <text evidence="4">The olfactory cyclic nucleotide-gated channel is an heterotetramer composed of CNGA2, CNGA4 and CNGB1b subunits with 2:1:1 stoichiometry.</text>
</comment>
<comment type="subcellular location">
    <subcellularLocation>
        <location evidence="4">Cell projection</location>
        <location evidence="4">Cilium membrane</location>
        <topology evidence="5">Multi-pass membrane protein</topology>
    </subcellularLocation>
</comment>
<comment type="tissue specificity">
    <text>Olfactory neurons.</text>
</comment>
<comment type="domain">
    <text evidence="1">The C-terminal coiled-coil domain mediates trimerization of CNGA subunits.</text>
</comment>
<comment type="miscellaneous">
    <text>The olfactory channel is activated by both cAMP and cGMP at similar concentrations, whereas the cGMP-gated channel is much less sensitive to cAMP.</text>
</comment>
<comment type="similarity">
    <text evidence="10">Belongs to the cyclic nucleotide-gated cation channel (TC 1.A.1.5) family. CNGA2 subfamily.</text>
</comment>
<keyword id="KW-0002">3D-structure</keyword>
<keyword id="KW-0106">Calcium</keyword>
<keyword id="KW-0107">Calcium channel</keyword>
<keyword id="KW-0109">Calcium transport</keyword>
<keyword id="KW-0112">Calmodulin-binding</keyword>
<keyword id="KW-0114">cAMP</keyword>
<keyword id="KW-0116">cAMP-binding</keyword>
<keyword id="KW-1003">Cell membrane</keyword>
<keyword id="KW-0966">Cell projection</keyword>
<keyword id="KW-0140">cGMP</keyword>
<keyword id="KW-0142">cGMP-binding</keyword>
<keyword id="KW-0175">Coiled coil</keyword>
<keyword id="KW-0407">Ion channel</keyword>
<keyword id="KW-0406">Ion transport</keyword>
<keyword id="KW-1071">Ligand-gated ion channel</keyword>
<keyword id="KW-0472">Membrane</keyword>
<keyword id="KW-0547">Nucleotide-binding</keyword>
<keyword id="KW-0552">Olfaction</keyword>
<keyword id="KW-1185">Reference proteome</keyword>
<keyword id="KW-0716">Sensory transduction</keyword>
<keyword id="KW-0812">Transmembrane</keyword>
<keyword id="KW-1133">Transmembrane helix</keyword>
<keyword id="KW-0813">Transport</keyword>
<organism>
    <name type="scientific">Bos taurus</name>
    <name type="common">Bovine</name>
    <dbReference type="NCBI Taxonomy" id="9913"/>
    <lineage>
        <taxon>Eukaryota</taxon>
        <taxon>Metazoa</taxon>
        <taxon>Chordata</taxon>
        <taxon>Craniata</taxon>
        <taxon>Vertebrata</taxon>
        <taxon>Euteleostomi</taxon>
        <taxon>Mammalia</taxon>
        <taxon>Eutheria</taxon>
        <taxon>Laurasiatheria</taxon>
        <taxon>Artiodactyla</taxon>
        <taxon>Ruminantia</taxon>
        <taxon>Pecora</taxon>
        <taxon>Bovidae</taxon>
        <taxon>Bovinae</taxon>
        <taxon>Bos</taxon>
    </lineage>
</organism>